<sequence length="440" mass="49807">MTNITQNQKITVVGAGLAGSECALQLADMGYSVVLYEMRDKTMTPAHKTHKFAELVCSNSFGSLGEHSAPGQLKWEAKKLNSHILQAAFEAQVPAGQALGMDREVFSAIMTEKVKNHPNIEIRNDVVKSLNDIPRPAVIATGPLTHDDLAESMRQHFGDEFLYFFDAIAPIIDADSINTEIAWKADRYDKGTGDYYNCPMNKEEYNRFIEEIQKARKIEPKDFETTDFFEGCMPIEVMVDRGPQTLRFGPMKPIGLDDPRTGRYPWAVVQLRQDNKEGTAYNMVGFQTRMAYGEQVRVFRMIPGLENAEFLKLGSIHRNLFINSPKRLNKDLSSKNDPWLFFAGQITGVEGYFESTCTGLMVSRFLNQKLKDQPFNPPPRESAFGSLLEAITDPTRAEHFQPTNINFALLPPLAEKERDKTLRKEKQIAIARNVMEQWNP</sequence>
<dbReference type="EC" id="2.1.1.74" evidence="1"/>
<dbReference type="EMBL" id="BX842655">
    <property type="protein sequence ID" value="CAE78217.1"/>
    <property type="molecule type" value="Genomic_DNA"/>
</dbReference>
<dbReference type="RefSeq" id="WP_011165755.1">
    <property type="nucleotide sequence ID" value="NC_005363.1"/>
</dbReference>
<dbReference type="SMR" id="Q6MHW5"/>
<dbReference type="STRING" id="264462.Bd3419"/>
<dbReference type="GeneID" id="93014235"/>
<dbReference type="KEGG" id="bba:Bd3419"/>
<dbReference type="eggNOG" id="COG1206">
    <property type="taxonomic scope" value="Bacteria"/>
</dbReference>
<dbReference type="HOGENOM" id="CLU_033057_1_0_7"/>
<dbReference type="Proteomes" id="UP000008080">
    <property type="component" value="Chromosome"/>
</dbReference>
<dbReference type="GO" id="GO:0005829">
    <property type="term" value="C:cytosol"/>
    <property type="evidence" value="ECO:0007669"/>
    <property type="project" value="TreeGrafter"/>
</dbReference>
<dbReference type="GO" id="GO:0050660">
    <property type="term" value="F:flavin adenine dinucleotide binding"/>
    <property type="evidence" value="ECO:0007669"/>
    <property type="project" value="UniProtKB-UniRule"/>
</dbReference>
<dbReference type="GO" id="GO:0047151">
    <property type="term" value="F:tRNA (uracil(54)-C5)-methyltransferase activity, 5,10-methylenetetrahydrofolate-dependent"/>
    <property type="evidence" value="ECO:0007669"/>
    <property type="project" value="UniProtKB-UniRule"/>
</dbReference>
<dbReference type="GO" id="GO:0030488">
    <property type="term" value="P:tRNA methylation"/>
    <property type="evidence" value="ECO:0007669"/>
    <property type="project" value="TreeGrafter"/>
</dbReference>
<dbReference type="GO" id="GO:0002098">
    <property type="term" value="P:tRNA wobble uridine modification"/>
    <property type="evidence" value="ECO:0007669"/>
    <property type="project" value="TreeGrafter"/>
</dbReference>
<dbReference type="Gene3D" id="3.50.50.60">
    <property type="entry name" value="FAD/NAD(P)-binding domain"/>
    <property type="match status" value="2"/>
</dbReference>
<dbReference type="HAMAP" id="MF_01037">
    <property type="entry name" value="TrmFO"/>
    <property type="match status" value="1"/>
</dbReference>
<dbReference type="InterPro" id="IPR036188">
    <property type="entry name" value="FAD/NAD-bd_sf"/>
</dbReference>
<dbReference type="InterPro" id="IPR002218">
    <property type="entry name" value="MnmG-rel"/>
</dbReference>
<dbReference type="InterPro" id="IPR040131">
    <property type="entry name" value="MnmG_N"/>
</dbReference>
<dbReference type="InterPro" id="IPR004417">
    <property type="entry name" value="TrmFO"/>
</dbReference>
<dbReference type="NCBIfam" id="TIGR00137">
    <property type="entry name" value="gid_trmFO"/>
    <property type="match status" value="1"/>
</dbReference>
<dbReference type="NCBIfam" id="NF003739">
    <property type="entry name" value="PRK05335.1"/>
    <property type="match status" value="1"/>
</dbReference>
<dbReference type="PANTHER" id="PTHR11806">
    <property type="entry name" value="GLUCOSE INHIBITED DIVISION PROTEIN A"/>
    <property type="match status" value="1"/>
</dbReference>
<dbReference type="PANTHER" id="PTHR11806:SF2">
    <property type="entry name" value="METHYLENETETRAHYDROFOLATE--TRNA-(URACIL-5-)-METHYLTRANSFERASE TRMFO"/>
    <property type="match status" value="1"/>
</dbReference>
<dbReference type="Pfam" id="PF01134">
    <property type="entry name" value="GIDA"/>
    <property type="match status" value="1"/>
</dbReference>
<dbReference type="SUPFAM" id="SSF51905">
    <property type="entry name" value="FAD/NAD(P)-binding domain"/>
    <property type="match status" value="1"/>
</dbReference>
<name>TRMFO_BDEBA</name>
<evidence type="ECO:0000255" key="1">
    <source>
        <dbReference type="HAMAP-Rule" id="MF_01037"/>
    </source>
</evidence>
<comment type="function">
    <text evidence="1">Catalyzes the folate-dependent formation of 5-methyl-uridine at position 54 (M-5-U54) in all tRNAs.</text>
</comment>
<comment type="catalytic activity">
    <reaction evidence="1">
        <text>uridine(54) in tRNA + (6R)-5,10-methylene-5,6,7,8-tetrahydrofolate + NADH + H(+) = 5-methyluridine(54) in tRNA + (6S)-5,6,7,8-tetrahydrofolate + NAD(+)</text>
        <dbReference type="Rhea" id="RHEA:16873"/>
        <dbReference type="Rhea" id="RHEA-COMP:10167"/>
        <dbReference type="Rhea" id="RHEA-COMP:10193"/>
        <dbReference type="ChEBI" id="CHEBI:15378"/>
        <dbReference type="ChEBI" id="CHEBI:15636"/>
        <dbReference type="ChEBI" id="CHEBI:57453"/>
        <dbReference type="ChEBI" id="CHEBI:57540"/>
        <dbReference type="ChEBI" id="CHEBI:57945"/>
        <dbReference type="ChEBI" id="CHEBI:65315"/>
        <dbReference type="ChEBI" id="CHEBI:74447"/>
        <dbReference type="EC" id="2.1.1.74"/>
    </reaction>
</comment>
<comment type="catalytic activity">
    <reaction evidence="1">
        <text>uridine(54) in tRNA + (6R)-5,10-methylene-5,6,7,8-tetrahydrofolate + NADPH + H(+) = 5-methyluridine(54) in tRNA + (6S)-5,6,7,8-tetrahydrofolate + NADP(+)</text>
        <dbReference type="Rhea" id="RHEA:62372"/>
        <dbReference type="Rhea" id="RHEA-COMP:10167"/>
        <dbReference type="Rhea" id="RHEA-COMP:10193"/>
        <dbReference type="ChEBI" id="CHEBI:15378"/>
        <dbReference type="ChEBI" id="CHEBI:15636"/>
        <dbReference type="ChEBI" id="CHEBI:57453"/>
        <dbReference type="ChEBI" id="CHEBI:57783"/>
        <dbReference type="ChEBI" id="CHEBI:58349"/>
        <dbReference type="ChEBI" id="CHEBI:65315"/>
        <dbReference type="ChEBI" id="CHEBI:74447"/>
        <dbReference type="EC" id="2.1.1.74"/>
    </reaction>
</comment>
<comment type="cofactor">
    <cofactor evidence="1">
        <name>FAD</name>
        <dbReference type="ChEBI" id="CHEBI:57692"/>
    </cofactor>
</comment>
<comment type="subcellular location">
    <subcellularLocation>
        <location evidence="1">Cytoplasm</location>
    </subcellularLocation>
</comment>
<comment type="similarity">
    <text evidence="1">Belongs to the MnmG family. TrmFO subfamily.</text>
</comment>
<organism>
    <name type="scientific">Bdellovibrio bacteriovorus (strain ATCC 15356 / DSM 50701 / NCIMB 9529 / HD100)</name>
    <dbReference type="NCBI Taxonomy" id="264462"/>
    <lineage>
        <taxon>Bacteria</taxon>
        <taxon>Pseudomonadati</taxon>
        <taxon>Bdellovibrionota</taxon>
        <taxon>Bdellovibrionia</taxon>
        <taxon>Bdellovibrionales</taxon>
        <taxon>Pseudobdellovibrionaceae</taxon>
        <taxon>Bdellovibrio</taxon>
    </lineage>
</organism>
<gene>
    <name evidence="1" type="primary">trmFO</name>
    <name type="ordered locus">Bd3419</name>
</gene>
<proteinExistence type="inferred from homology"/>
<protein>
    <recommendedName>
        <fullName evidence="1">Methylenetetrahydrofolate--tRNA-(uracil-5-)-methyltransferase TrmFO</fullName>
        <ecNumber evidence="1">2.1.1.74</ecNumber>
    </recommendedName>
    <alternativeName>
        <fullName evidence="1">Folate-dependent tRNA (uracil-5-)-methyltransferase</fullName>
    </alternativeName>
    <alternativeName>
        <fullName evidence="1">Folate-dependent tRNA(M-5-U54)-methyltransferase</fullName>
    </alternativeName>
</protein>
<reference key="1">
    <citation type="journal article" date="2004" name="Science">
        <title>A predator unmasked: life cycle of Bdellovibrio bacteriovorus from a genomic perspective.</title>
        <authorList>
            <person name="Rendulic S."/>
            <person name="Jagtap P."/>
            <person name="Rosinus A."/>
            <person name="Eppinger M."/>
            <person name="Baar C."/>
            <person name="Lanz C."/>
            <person name="Keller H."/>
            <person name="Lambert C."/>
            <person name="Evans K.J."/>
            <person name="Goesmann A."/>
            <person name="Meyer F."/>
            <person name="Sockett R.E."/>
            <person name="Schuster S.C."/>
        </authorList>
    </citation>
    <scope>NUCLEOTIDE SEQUENCE [LARGE SCALE GENOMIC DNA]</scope>
    <source>
        <strain>ATCC 15356 / DSM 50701 / NCIMB 9529 / HD100</strain>
    </source>
</reference>
<accession>Q6MHW5</accession>
<keyword id="KW-0963">Cytoplasm</keyword>
<keyword id="KW-0274">FAD</keyword>
<keyword id="KW-0285">Flavoprotein</keyword>
<keyword id="KW-0489">Methyltransferase</keyword>
<keyword id="KW-0520">NAD</keyword>
<keyword id="KW-0521">NADP</keyword>
<keyword id="KW-1185">Reference proteome</keyword>
<keyword id="KW-0808">Transferase</keyword>
<keyword id="KW-0819">tRNA processing</keyword>
<feature type="chain" id="PRO_0000346323" description="Methylenetetrahydrofolate--tRNA-(uracil-5-)-methyltransferase TrmFO">
    <location>
        <begin position="1"/>
        <end position="440"/>
    </location>
</feature>
<feature type="binding site" evidence="1">
    <location>
        <begin position="14"/>
        <end position="19"/>
    </location>
    <ligand>
        <name>FAD</name>
        <dbReference type="ChEBI" id="CHEBI:57692"/>
    </ligand>
</feature>